<proteinExistence type="inferred from homology"/>
<feature type="chain" id="PRO_0000122917" description="Meiotic recombination protein DLH1">
    <location>
        <begin position="1"/>
        <end position="324"/>
    </location>
</feature>
<feature type="binding site" evidence="3">
    <location>
        <begin position="112"/>
        <end position="119"/>
    </location>
    <ligand>
        <name>ATP</name>
        <dbReference type="ChEBI" id="CHEBI:30616"/>
    </ligand>
</feature>
<feature type="binding site" evidence="2">
    <location>
        <position position="214"/>
    </location>
    <ligand>
        <name>dsDNA</name>
        <dbReference type="ChEBI" id="CHEBI:4705"/>
    </ligand>
</feature>
<feature type="binding site" evidence="2">
    <location>
        <position position="214"/>
    </location>
    <ligand>
        <name>ssDNA</name>
        <dbReference type="ChEBI" id="CHEBI:9160"/>
    </ligand>
</feature>
<feature type="binding site" evidence="2">
    <location>
        <position position="217"/>
    </location>
    <ligand>
        <name>ssDNA</name>
        <dbReference type="ChEBI" id="CHEBI:9160"/>
    </ligand>
</feature>
<feature type="binding site" evidence="2">
    <location>
        <position position="220"/>
    </location>
    <ligand>
        <name>dsDNA</name>
        <dbReference type="ChEBI" id="CHEBI:4705"/>
    </ligand>
</feature>
<feature type="binding site" evidence="2">
    <location>
        <position position="220"/>
    </location>
    <ligand>
        <name>ssDNA</name>
        <dbReference type="ChEBI" id="CHEBI:9160"/>
    </ligand>
</feature>
<feature type="binding site" evidence="2">
    <location>
        <position position="226"/>
    </location>
    <ligand>
        <name>dsDNA</name>
        <dbReference type="ChEBI" id="CHEBI:4705"/>
    </ligand>
</feature>
<feature type="binding site" evidence="2">
    <location>
        <position position="226"/>
    </location>
    <ligand>
        <name>ssDNA</name>
        <dbReference type="ChEBI" id="CHEBI:9160"/>
    </ligand>
</feature>
<feature type="binding site" evidence="2">
    <location>
        <position position="296"/>
    </location>
    <ligand>
        <name>ssDNA</name>
        <dbReference type="ChEBI" id="CHEBI:9160"/>
    </ligand>
</feature>
<dbReference type="EMBL" id="U39808">
    <property type="protein sequence ID" value="AAC49400.1"/>
    <property type="molecule type" value="Genomic_DNA"/>
</dbReference>
<dbReference type="PIR" id="S70390">
    <property type="entry name" value="S70390"/>
</dbReference>
<dbReference type="SMR" id="P50265"/>
<dbReference type="VEuPathDB" id="FungiDB:C1_12560C_A"/>
<dbReference type="VEuPathDB" id="FungiDB:CAWG_00186"/>
<dbReference type="GO" id="GO:0000794">
    <property type="term" value="C:condensed nuclear chromosome"/>
    <property type="evidence" value="ECO:0007669"/>
    <property type="project" value="EnsemblFungi"/>
</dbReference>
<dbReference type="GO" id="GO:0005524">
    <property type="term" value="F:ATP binding"/>
    <property type="evidence" value="ECO:0000250"/>
    <property type="project" value="UniProtKB"/>
</dbReference>
<dbReference type="GO" id="GO:0016887">
    <property type="term" value="F:ATP hydrolysis activity"/>
    <property type="evidence" value="ECO:0007669"/>
    <property type="project" value="InterPro"/>
</dbReference>
<dbReference type="GO" id="GO:0140664">
    <property type="term" value="F:ATP-dependent DNA damage sensor activity"/>
    <property type="evidence" value="ECO:0007669"/>
    <property type="project" value="InterPro"/>
</dbReference>
<dbReference type="GO" id="GO:0042030">
    <property type="term" value="F:ATPase inhibitor activity"/>
    <property type="evidence" value="ECO:0007669"/>
    <property type="project" value="EnsemblFungi"/>
</dbReference>
<dbReference type="GO" id="GO:0000150">
    <property type="term" value="F:DNA strand exchange activity"/>
    <property type="evidence" value="ECO:0000250"/>
    <property type="project" value="UniProtKB"/>
</dbReference>
<dbReference type="GO" id="GO:0003690">
    <property type="term" value="F:double-stranded DNA binding"/>
    <property type="evidence" value="ECO:0000250"/>
    <property type="project" value="UniProtKB"/>
</dbReference>
<dbReference type="GO" id="GO:0003697">
    <property type="term" value="F:single-stranded DNA binding"/>
    <property type="evidence" value="ECO:0000250"/>
    <property type="project" value="UniProtKB"/>
</dbReference>
<dbReference type="GO" id="GO:0000730">
    <property type="term" value="P:DNA recombinase assembly"/>
    <property type="evidence" value="ECO:0007669"/>
    <property type="project" value="TreeGrafter"/>
</dbReference>
<dbReference type="GO" id="GO:0042148">
    <property type="term" value="P:DNA strand invasion"/>
    <property type="evidence" value="ECO:0007669"/>
    <property type="project" value="TreeGrafter"/>
</dbReference>
<dbReference type="GO" id="GO:0000709">
    <property type="term" value="P:meiotic joint molecule formation"/>
    <property type="evidence" value="ECO:0007669"/>
    <property type="project" value="EnsemblFungi"/>
</dbReference>
<dbReference type="GO" id="GO:0006312">
    <property type="term" value="P:mitotic recombination"/>
    <property type="evidence" value="ECO:0007669"/>
    <property type="project" value="TreeGrafter"/>
</dbReference>
<dbReference type="GO" id="GO:0007130">
    <property type="term" value="P:synaptonemal complex assembly"/>
    <property type="evidence" value="ECO:0007669"/>
    <property type="project" value="EnsemblFungi"/>
</dbReference>
<dbReference type="CDD" id="cd19514">
    <property type="entry name" value="DMC1"/>
    <property type="match status" value="1"/>
</dbReference>
<dbReference type="FunFam" id="1.10.150.20:FF:000056">
    <property type="entry name" value="Meiotic recombination protein DMC1"/>
    <property type="match status" value="1"/>
</dbReference>
<dbReference type="FunFam" id="3.40.50.300:FF:000239">
    <property type="entry name" value="Meiotic recombination protein DMC1"/>
    <property type="match status" value="1"/>
</dbReference>
<dbReference type="Gene3D" id="1.10.150.20">
    <property type="entry name" value="5' to 3' exonuclease, C-terminal subdomain"/>
    <property type="match status" value="1"/>
</dbReference>
<dbReference type="Gene3D" id="3.40.50.300">
    <property type="entry name" value="P-loop containing nucleotide triphosphate hydrolases"/>
    <property type="match status" value="1"/>
</dbReference>
<dbReference type="InterPro" id="IPR003593">
    <property type="entry name" value="AAA+_ATPase"/>
</dbReference>
<dbReference type="InterPro" id="IPR011940">
    <property type="entry name" value="Dmc1"/>
</dbReference>
<dbReference type="InterPro" id="IPR013632">
    <property type="entry name" value="DNA_recomb/repair_Rad51_C"/>
</dbReference>
<dbReference type="InterPro" id="IPR016467">
    <property type="entry name" value="DNA_recomb/repair_RecA-like"/>
</dbReference>
<dbReference type="InterPro" id="IPR010995">
    <property type="entry name" value="DNA_repair_Rad51/TF_NusA_a-hlx"/>
</dbReference>
<dbReference type="InterPro" id="IPR027417">
    <property type="entry name" value="P-loop_NTPase"/>
</dbReference>
<dbReference type="InterPro" id="IPR020588">
    <property type="entry name" value="RecA_ATP-bd"/>
</dbReference>
<dbReference type="InterPro" id="IPR020587">
    <property type="entry name" value="RecA_monomer-monomer_interface"/>
</dbReference>
<dbReference type="NCBIfam" id="NF003301">
    <property type="entry name" value="PRK04301.1"/>
    <property type="match status" value="1"/>
</dbReference>
<dbReference type="NCBIfam" id="TIGR02238">
    <property type="entry name" value="recomb_DMC1"/>
    <property type="match status" value="1"/>
</dbReference>
<dbReference type="PANTHER" id="PTHR22942:SF30">
    <property type="entry name" value="MEIOTIC RECOMBINATION PROTEIN DMC1_LIM15 HOMOLOG"/>
    <property type="match status" value="1"/>
</dbReference>
<dbReference type="PANTHER" id="PTHR22942">
    <property type="entry name" value="RECA/RAD51/RADA DNA STRAND-PAIRING FAMILY MEMBER"/>
    <property type="match status" value="1"/>
</dbReference>
<dbReference type="Pfam" id="PF14520">
    <property type="entry name" value="HHH_5"/>
    <property type="match status" value="1"/>
</dbReference>
<dbReference type="Pfam" id="PF08423">
    <property type="entry name" value="Rad51"/>
    <property type="match status" value="1"/>
</dbReference>
<dbReference type="PIRSF" id="PIRSF005856">
    <property type="entry name" value="Rad51"/>
    <property type="match status" value="1"/>
</dbReference>
<dbReference type="SMART" id="SM00382">
    <property type="entry name" value="AAA"/>
    <property type="match status" value="1"/>
</dbReference>
<dbReference type="SUPFAM" id="SSF52540">
    <property type="entry name" value="P-loop containing nucleoside triphosphate hydrolases"/>
    <property type="match status" value="1"/>
</dbReference>
<dbReference type="SUPFAM" id="SSF47794">
    <property type="entry name" value="Rad51 N-terminal domain-like"/>
    <property type="match status" value="1"/>
</dbReference>
<dbReference type="PROSITE" id="PS50162">
    <property type="entry name" value="RECA_2"/>
    <property type="match status" value="1"/>
</dbReference>
<dbReference type="PROSITE" id="PS50163">
    <property type="entry name" value="RECA_3"/>
    <property type="match status" value="1"/>
</dbReference>
<organism>
    <name type="scientific">Candida albicans</name>
    <name type="common">Yeast</name>
    <dbReference type="NCBI Taxonomy" id="5476"/>
    <lineage>
        <taxon>Eukaryota</taxon>
        <taxon>Fungi</taxon>
        <taxon>Dikarya</taxon>
        <taxon>Ascomycota</taxon>
        <taxon>Saccharomycotina</taxon>
        <taxon>Pichiomycetes</taxon>
        <taxon>Debaryomycetaceae</taxon>
        <taxon>Candida/Lodderomyces clade</taxon>
        <taxon>Candida</taxon>
    </lineage>
</organism>
<accession>P50265</accession>
<comment type="function">
    <text evidence="1">Required for meiotic recombination, synaptonemal complex formation and cell cycle progression.</text>
</comment>
<comment type="subunit">
    <text evidence="1">Double stacked ring-shaped homooctamer.</text>
</comment>
<comment type="subcellular location">
    <subcellularLocation>
        <location evidence="4">Nucleus</location>
    </subcellularLocation>
</comment>
<comment type="similarity">
    <text evidence="4">Belongs to the RecA family. DMC1 subfamily.</text>
</comment>
<keyword id="KW-0067">ATP-binding</keyword>
<keyword id="KW-0131">Cell cycle</keyword>
<keyword id="KW-0238">DNA-binding</keyword>
<keyword id="KW-0469">Meiosis</keyword>
<keyword id="KW-0547">Nucleotide-binding</keyword>
<keyword id="KW-0539">Nucleus</keyword>
<gene>
    <name type="primary">DLH1</name>
</gene>
<reference key="1">
    <citation type="journal article" date="1996" name="Genetics">
        <title>DLH1 is a functional Candida albicans homologue of the meiosis-specific gene DMC1.</title>
        <authorList>
            <person name="Diener A.C."/>
            <person name="Fink G.R."/>
        </authorList>
    </citation>
    <scope>NUCLEOTIDE SEQUENCE [GENOMIC DNA]</scope>
</reference>
<evidence type="ECO:0000250" key="1"/>
<evidence type="ECO:0000250" key="2">
    <source>
        <dbReference type="UniProtKB" id="Q14565"/>
    </source>
</evidence>
<evidence type="ECO:0000255" key="3"/>
<evidence type="ECO:0000305" key="4"/>
<name>DLH1_CANAX</name>
<protein>
    <recommendedName>
        <fullName>Meiotic recombination protein DLH1</fullName>
    </recommendedName>
    <alternativeName>
        <fullName>DMC1 homolog</fullName>
    </alternativeName>
</protein>
<sequence length="324" mass="35281">MSVEDSIISIDSLQDQGINAGDINKLKSAGICSITSVLSTTRRNLTKIKGLSEIKVEKIKEAAGKIKKYGFLPATIVAESRTKVFHITTGSKQFDEILGGGIQSMSITEVFGEFRCGKTQLCHTLCVAAQLPTDMGGGEGRVAYIDTEGTFRPDRIRSIAERYGVDADICLENISYARALNSEHQIELVEQLGNELAEGTFRLLIVDSIMACFRVDYSGRGELNERQQKLNQHLSNLTRVAEDYNIAVFLTNQVQSDPGASALFAAADGRKPVGGHVLAHASATRILLRKGRGEERVAKLQDSPNMPEKECVYVIGEGGIKDTD</sequence>